<evidence type="ECO:0000250" key="1"/>
<evidence type="ECO:0000255" key="2"/>
<evidence type="ECO:0000255" key="3">
    <source>
        <dbReference type="PROSITE-ProRule" id="PRU00407"/>
    </source>
</evidence>
<evidence type="ECO:0000255" key="4">
    <source>
        <dbReference type="PROSITE-ProRule" id="PRU01189"/>
    </source>
</evidence>
<evidence type="ECO:0000256" key="5">
    <source>
        <dbReference type="SAM" id="MobiDB-lite"/>
    </source>
</evidence>
<evidence type="ECO:0000269" key="6">
    <source>
    </source>
</evidence>
<evidence type="ECO:0000269" key="7">
    <source>
    </source>
</evidence>
<evidence type="ECO:0000303" key="8">
    <source>
    </source>
</evidence>
<evidence type="ECO:0000303" key="9">
    <source>
    </source>
</evidence>
<evidence type="ECO:0000305" key="10"/>
<sequence>MANSSKERLCGAGAPLGHANGFPPSVYPFAFSGGIRRSPPFEVLANGGFFRSFPTDLPKEMASLSLTMGAAERSAHSDCISTVETQSTSSEEMVPSSPSPPPPPRVYKPCFVCNDKSSGYHYGVSSCEGCKGFFRRSIQKNMVYTCHRDKNCQINKVTRNRCQFCRLQKCFQVGMSKEAVRNDRNKKKKEIKEEVVLPDSYEMPPEMEELIQKVSKAHQETFPSLCQLGKYTTNSSADQRVQLDLGLWDKFSELSTKCIIKIVEFAKRLPGFTTLTIADQITLLKSACLDILMLRICTRYTPEQDTMTFSDGLTLNRTQMHNAGFGPLTDLVFSFADQLLPLEMDDTETGLLSAICLICGDRMDLEEPEKVEKLQEPLLEALKFYARRRRPDKPYMFPRMLMKITDLRGISTKGAERAITLKLEIPGPMPPLIREMLENPEAFEDGAATPKPSERSSSESSNGSPTGEDSSGSKTP</sequence>
<organism>
    <name type="scientific">Xenopus laevis</name>
    <name type="common">African clawed frog</name>
    <dbReference type="NCBI Taxonomy" id="8355"/>
    <lineage>
        <taxon>Eukaryota</taxon>
        <taxon>Metazoa</taxon>
        <taxon>Chordata</taxon>
        <taxon>Craniata</taxon>
        <taxon>Vertebrata</taxon>
        <taxon>Euteleostomi</taxon>
        <taxon>Amphibia</taxon>
        <taxon>Batrachia</taxon>
        <taxon>Anura</taxon>
        <taxon>Pipoidea</taxon>
        <taxon>Pipidae</taxon>
        <taxon>Xenopodinae</taxon>
        <taxon>Xenopus</taxon>
        <taxon>Xenopus</taxon>
    </lineage>
</organism>
<comment type="function">
    <text evidence="1">Receptor for retinoic acid. Retinoic acid receptors bind as heterodimers to their target response elements in response to their ligands, all-trans or 9-cis retinoic acid, and regulate gene expression in various biological processes. The rar/rxr heterodimers bind to the retinoic acid response elements (RARE) composed of tandem 5'-AGGTCA-3' sites known as DR1-DR5 (By similarity).</text>
</comment>
<comment type="subunit">
    <text evidence="1">Heterodimer; with a rxr molecule. Binds DNA preferentially as a rar/rxr heterodimer.</text>
</comment>
<comment type="subcellular location">
    <subcellularLocation>
        <location evidence="3">Nucleus</location>
    </subcellularLocation>
</comment>
<comment type="alternative products">
    <event type="alternative splicing"/>
    <isoform>
        <id>P28699-1</id>
        <name>RAR-gamma-1</name>
        <sequence type="displayed"/>
    </isoform>
    <isoform>
        <id>P28699-2</id>
        <name>RAR-gamma-2</name>
        <sequence type="described" ref="VSP_003642"/>
    </isoform>
    <text>Isoforms differ in their N-terminal section.</text>
</comment>
<comment type="tissue specificity">
    <text evidence="6">Expressed in embryos, tadpoles and various adult tissue such as kidney, testis, brain, liver, skeletal muscle and spleen.</text>
</comment>
<comment type="developmental stage">
    <text evidence="6 7">It is synthesized during oogenesis and persists during early cleavage. It accumulates at gastrulation (stage 10), peaks in quantity during neurulation (stage 17), then drops to a low level after stage 26. Isoform 1 is strongly expressed in branchial arches and to a lesser extent in the neural floor plate, but is not expressed neither in the pre-somitic mesoderm nor notochord. At gastrula stages 10-11, isoform 2 is mainly found in ectoderm and mesoderm with greater expression in the prospective dorsal side. At neurula stage, expressed anteriorly in the head mesoderm and in the archenteron roof. In early tadpole stage, expressed in head mesenchyme and in the tailbud.</text>
</comment>
<comment type="domain">
    <text>Composed of three domains: a modulating N-terminal domain, a DNA-binding domain and a C-terminal ligand-binding domain.</text>
</comment>
<comment type="similarity">
    <text evidence="10">Belongs to the nuclear hormone receptor family. NR1 subfamily.</text>
</comment>
<reference key="1">
    <citation type="journal article" date="1992" name="Proc. Natl. Acad. Sci. U.S.A.">
        <title>Multiple retinoid-responsive receptors in a single cell: families of retinoid 'X' receptors and retinoic acid receptors in the Xenopus egg.</title>
        <authorList>
            <person name="Blumberg B."/>
            <person name="Mangelsdorf D.J."/>
            <person name="Dyck J.A."/>
            <person name="Bittner D.A."/>
            <person name="Evans R.M."/>
            <person name="De Robertis E.M."/>
        </authorList>
    </citation>
    <scope>NUCLEOTIDE SEQUENCE [MRNA] (ISOFORM RAR-GAMMA-1)</scope>
</reference>
<reference key="2">
    <citation type="journal article" date="1991" name="Genes Dev.">
        <title>A retinoic acid receptor expressed in the early development of Xenopus laevis.</title>
        <authorList>
            <person name="Ellinger-Ziegelbauer H."/>
            <person name="Dreyer C."/>
        </authorList>
    </citation>
    <scope>NUCLEOTIDE SEQUENCE [MRNA] (ISOFORM RAR-GAMMA-2)</scope>
    <scope>TISSUE SPECIFICITY</scope>
    <scope>DEVELOPMENTAL STAGE</scope>
    <source>
        <tissue>Neurula</tissue>
    </source>
</reference>
<reference key="3">
    <citation type="journal article" date="1995" name="Dev. Genet.">
        <title>Two isoforms of Xenopus retinoic acid receptor gamma 2 (B) exhibit differential expression and sensitivity to retinoic acid during embryogenesis.</title>
        <authorList>
            <person name="Crawford M.J."/>
            <person name="Liversage R.A."/>
            <person name="Varmuza S.L."/>
        </authorList>
    </citation>
    <scope>NUCLEOTIDE SEQUENCE [MRNA] (ISOFORM RAR-GAMMA-2)</scope>
    <scope>DEVELOPMENTAL STAGE</scope>
</reference>
<protein>
    <recommendedName>
        <fullName>Retinoic acid receptor gamma</fullName>
        <shortName>RAR-gamma</shortName>
    </recommendedName>
    <alternativeName>
        <fullName>Nuclear receptor subfamily 1 group B member 3</fullName>
    </alternativeName>
</protein>
<feature type="chain" id="PRO_0000053476" description="Retinoic acid receptor gamma">
    <location>
        <begin position="1"/>
        <end position="476"/>
    </location>
</feature>
<feature type="domain" description="NR LBD" evidence="4">
    <location>
        <begin position="206"/>
        <end position="440"/>
    </location>
</feature>
<feature type="DNA-binding region" description="Nuclear receptor" evidence="3">
    <location>
        <begin position="110"/>
        <end position="175"/>
    </location>
</feature>
<feature type="zinc finger region" description="NR C4-type" evidence="3">
    <location>
        <begin position="110"/>
        <end position="130"/>
    </location>
</feature>
<feature type="zinc finger region" description="NR C4-type" evidence="3">
    <location>
        <begin position="146"/>
        <end position="170"/>
    </location>
</feature>
<feature type="region of interest" description="Modulating">
    <location>
        <begin position="1"/>
        <end position="109"/>
    </location>
</feature>
<feature type="region of interest" description="Disordered" evidence="5">
    <location>
        <begin position="81"/>
        <end position="102"/>
    </location>
</feature>
<feature type="region of interest" description="Hinge">
    <location>
        <begin position="176"/>
        <end position="205"/>
    </location>
</feature>
<feature type="region of interest" description="Disordered" evidence="5">
    <location>
        <begin position="435"/>
        <end position="476"/>
    </location>
</feature>
<feature type="short sequence motif" description="Nuclear localization signal" evidence="2">
    <location>
        <begin position="184"/>
        <end position="189"/>
    </location>
</feature>
<feature type="compositionally biased region" description="Low complexity" evidence="5">
    <location>
        <begin position="81"/>
        <end position="96"/>
    </location>
</feature>
<feature type="compositionally biased region" description="Polar residues" evidence="5">
    <location>
        <begin position="462"/>
        <end position="476"/>
    </location>
</feature>
<feature type="splice variant" id="VSP_003642" description="In isoform RAR-gamma-2." evidence="8 9">
    <original>MANSSKERLCGAGAPLGHANGFPPSVYPFAFSGGIRRSPPFEVLANGGFFRSFPTDLPKEMASLSLTMGAAERSAHSDCIST</original>
    <variation>MYDCMEAFPLMPRPLYDMSPQGPCMLRKAGCFGGLDPFGWMQSHSMQS</variation>
    <location>
        <begin position="1"/>
        <end position="82"/>
    </location>
</feature>
<feature type="sequence conflict" description="In Ref. 3; AAB47116/AAB47115." evidence="10" ref="3">
    <original>Q</original>
    <variation>R</variation>
    <location>
        <position position="242"/>
    </location>
</feature>
<feature type="sequence conflict" description="In Ref. 2; CAA42039." evidence="10" ref="2">
    <original>A</original>
    <variation>G</variation>
    <location>
        <position position="381"/>
    </location>
</feature>
<gene>
    <name type="primary">rarg</name>
    <name type="synonym">nr1b3</name>
</gene>
<name>RARG_XENLA</name>
<keyword id="KW-0025">Alternative splicing</keyword>
<keyword id="KW-0238">DNA-binding</keyword>
<keyword id="KW-0479">Metal-binding</keyword>
<keyword id="KW-0539">Nucleus</keyword>
<keyword id="KW-0675">Receptor</keyword>
<keyword id="KW-1185">Reference proteome</keyword>
<keyword id="KW-0804">Transcription</keyword>
<keyword id="KW-0805">Transcription regulation</keyword>
<keyword id="KW-0862">Zinc</keyword>
<keyword id="KW-0863">Zinc-finger</keyword>
<proteinExistence type="evidence at transcript level"/>
<dbReference type="EMBL" id="L11444">
    <property type="status" value="NOT_ANNOTATED_CDS"/>
    <property type="molecule type" value="mRNA"/>
</dbReference>
<dbReference type="EMBL" id="X59396">
    <property type="protein sequence ID" value="CAA42039.1"/>
    <property type="molecule type" value="mRNA"/>
</dbReference>
<dbReference type="EMBL" id="S82175">
    <property type="protein sequence ID" value="AAB47116.1"/>
    <property type="molecule type" value="mRNA"/>
</dbReference>
<dbReference type="EMBL" id="S82173">
    <property type="protein sequence ID" value="AAB47115.1"/>
    <property type="molecule type" value="mRNA"/>
</dbReference>
<dbReference type="PIR" id="A38592">
    <property type="entry name" value="A38592"/>
</dbReference>
<dbReference type="PIR" id="B41977">
    <property type="entry name" value="B41977"/>
</dbReference>
<dbReference type="RefSeq" id="NP_001081663.1">
    <property type="nucleotide sequence ID" value="NM_001088194.1"/>
</dbReference>
<dbReference type="RefSeq" id="XP_018103594.1">
    <molecule id="P28699-1"/>
    <property type="nucleotide sequence ID" value="XM_018248105.1"/>
</dbReference>
<dbReference type="SMR" id="P28699"/>
<dbReference type="DNASU" id="397983"/>
<dbReference type="GeneID" id="397983"/>
<dbReference type="KEGG" id="xla:397983"/>
<dbReference type="AGR" id="Xenbase:XB-GENE-865050"/>
<dbReference type="CTD" id="397983"/>
<dbReference type="Xenbase" id="XB-GENE-865050">
    <property type="gene designation" value="rarg.S"/>
</dbReference>
<dbReference type="OMA" id="DSEGEPW"/>
<dbReference type="OrthoDB" id="6081310at2759"/>
<dbReference type="Proteomes" id="UP000186698">
    <property type="component" value="Chromosome 2S"/>
</dbReference>
<dbReference type="Bgee" id="397983">
    <property type="expression patterns" value="Expressed in neurula embryo and 19 other cell types or tissues"/>
</dbReference>
<dbReference type="GO" id="GO:0005634">
    <property type="term" value="C:nucleus"/>
    <property type="evidence" value="ECO:0000318"/>
    <property type="project" value="GO_Central"/>
</dbReference>
<dbReference type="GO" id="GO:0005667">
    <property type="term" value="C:transcription regulator complex"/>
    <property type="evidence" value="ECO:0000318"/>
    <property type="project" value="GO_Central"/>
</dbReference>
<dbReference type="GO" id="GO:0000981">
    <property type="term" value="F:DNA-binding transcription factor activity, RNA polymerase II-specific"/>
    <property type="evidence" value="ECO:0000318"/>
    <property type="project" value="GO_Central"/>
</dbReference>
<dbReference type="GO" id="GO:0035259">
    <property type="term" value="F:nuclear glucocorticoid receptor binding"/>
    <property type="evidence" value="ECO:0000318"/>
    <property type="project" value="GO_Central"/>
</dbReference>
<dbReference type="GO" id="GO:0004879">
    <property type="term" value="F:nuclear receptor activity"/>
    <property type="evidence" value="ECO:0007669"/>
    <property type="project" value="InterPro"/>
</dbReference>
<dbReference type="GO" id="GO:0000978">
    <property type="term" value="F:RNA polymerase II cis-regulatory region sequence-specific DNA binding"/>
    <property type="evidence" value="ECO:0000318"/>
    <property type="project" value="GO_Central"/>
</dbReference>
<dbReference type="GO" id="GO:0008270">
    <property type="term" value="F:zinc ion binding"/>
    <property type="evidence" value="ECO:0007669"/>
    <property type="project" value="UniProtKB-KW"/>
</dbReference>
<dbReference type="GO" id="GO:0071376">
    <property type="term" value="P:cellular response to corticotropin-releasing hormone stimulus"/>
    <property type="evidence" value="ECO:0000318"/>
    <property type="project" value="GO_Central"/>
</dbReference>
<dbReference type="GO" id="GO:0006357">
    <property type="term" value="P:regulation of transcription by RNA polymerase II"/>
    <property type="evidence" value="ECO:0000318"/>
    <property type="project" value="GO_Central"/>
</dbReference>
<dbReference type="GO" id="GO:0048384">
    <property type="term" value="P:retinoic acid receptor signaling pathway"/>
    <property type="evidence" value="ECO:0007669"/>
    <property type="project" value="InterPro"/>
</dbReference>
<dbReference type="CDD" id="cd06964">
    <property type="entry name" value="NR_DBD_RAR"/>
    <property type="match status" value="1"/>
</dbReference>
<dbReference type="CDD" id="cd06937">
    <property type="entry name" value="NR_LBD_RAR"/>
    <property type="match status" value="1"/>
</dbReference>
<dbReference type="FunFam" id="1.10.565.10:FF:000001">
    <property type="entry name" value="Retinoic acid receptor beta isoform"/>
    <property type="match status" value="1"/>
</dbReference>
<dbReference type="FunFam" id="3.30.50.10:FF:000004">
    <property type="entry name" value="Retinoic acid receptor beta isoform"/>
    <property type="match status" value="1"/>
</dbReference>
<dbReference type="Gene3D" id="3.30.50.10">
    <property type="entry name" value="Erythroid Transcription Factor GATA-1, subunit A"/>
    <property type="match status" value="1"/>
</dbReference>
<dbReference type="Gene3D" id="1.10.565.10">
    <property type="entry name" value="Retinoid X Receptor"/>
    <property type="match status" value="1"/>
</dbReference>
<dbReference type="InterPro" id="IPR035500">
    <property type="entry name" value="NHR-like_dom_sf"/>
</dbReference>
<dbReference type="InterPro" id="IPR047159">
    <property type="entry name" value="NR_DBD_RAR"/>
</dbReference>
<dbReference type="InterPro" id="IPR047158">
    <property type="entry name" value="NR_LBD_RAR"/>
</dbReference>
<dbReference type="InterPro" id="IPR000536">
    <property type="entry name" value="Nucl_hrmn_rcpt_lig-bd"/>
</dbReference>
<dbReference type="InterPro" id="IPR001723">
    <property type="entry name" value="Nuclear_hrmn_rcpt"/>
</dbReference>
<dbReference type="InterPro" id="IPR003078">
    <property type="entry name" value="Retinoic_acid_rcpt"/>
</dbReference>
<dbReference type="InterPro" id="IPR001628">
    <property type="entry name" value="Znf_hrmn_rcpt"/>
</dbReference>
<dbReference type="InterPro" id="IPR013088">
    <property type="entry name" value="Znf_NHR/GATA"/>
</dbReference>
<dbReference type="PANTHER" id="PTHR24085">
    <property type="entry name" value="NUCLEAR HORMONE RECEPTOR"/>
    <property type="match status" value="1"/>
</dbReference>
<dbReference type="PANTHER" id="PTHR24085:SF7">
    <property type="entry name" value="RETINOIC ACID RECEPTOR GAMMA"/>
    <property type="match status" value="1"/>
</dbReference>
<dbReference type="Pfam" id="PF00104">
    <property type="entry name" value="Hormone_recep"/>
    <property type="match status" value="1"/>
</dbReference>
<dbReference type="Pfam" id="PF00105">
    <property type="entry name" value="zf-C4"/>
    <property type="match status" value="1"/>
</dbReference>
<dbReference type="PRINTS" id="PR01292">
    <property type="entry name" value="RETNOICACIDR"/>
</dbReference>
<dbReference type="PRINTS" id="PR00398">
    <property type="entry name" value="STRDHORMONER"/>
</dbReference>
<dbReference type="PRINTS" id="PR00047">
    <property type="entry name" value="STROIDFINGER"/>
</dbReference>
<dbReference type="SMART" id="SM00430">
    <property type="entry name" value="HOLI"/>
    <property type="match status" value="1"/>
</dbReference>
<dbReference type="SMART" id="SM00399">
    <property type="entry name" value="ZnF_C4"/>
    <property type="match status" value="1"/>
</dbReference>
<dbReference type="SUPFAM" id="SSF57716">
    <property type="entry name" value="Glucocorticoid receptor-like (DNA-binding domain)"/>
    <property type="match status" value="1"/>
</dbReference>
<dbReference type="SUPFAM" id="SSF48508">
    <property type="entry name" value="Nuclear receptor ligand-binding domain"/>
    <property type="match status" value="1"/>
</dbReference>
<dbReference type="PROSITE" id="PS51843">
    <property type="entry name" value="NR_LBD"/>
    <property type="match status" value="1"/>
</dbReference>
<dbReference type="PROSITE" id="PS00031">
    <property type="entry name" value="NUCLEAR_REC_DBD_1"/>
    <property type="match status" value="1"/>
</dbReference>
<dbReference type="PROSITE" id="PS51030">
    <property type="entry name" value="NUCLEAR_REC_DBD_2"/>
    <property type="match status" value="1"/>
</dbReference>
<accession>P28699</accession>
<accession>P51127</accession>
<accession>P79878</accession>
<accession>P79879</accession>